<organism>
    <name type="scientific">Saccharomyces cerevisiae (strain ATCC 204508 / S288c)</name>
    <name type="common">Baker's yeast</name>
    <dbReference type="NCBI Taxonomy" id="559292"/>
    <lineage>
        <taxon>Eukaryota</taxon>
        <taxon>Fungi</taxon>
        <taxon>Dikarya</taxon>
        <taxon>Ascomycota</taxon>
        <taxon>Saccharomycotina</taxon>
        <taxon>Saccharomycetes</taxon>
        <taxon>Saccharomycetales</taxon>
        <taxon>Saccharomycetaceae</taxon>
        <taxon>Saccharomyces</taxon>
    </lineage>
</organism>
<name>YMN1_YEAST</name>
<keyword id="KW-0472">Membrane</keyword>
<keyword id="KW-0521">NADP</keyword>
<keyword id="KW-0560">Oxidoreductase</keyword>
<keyword id="KW-1185">Reference proteome</keyword>
<keyword id="KW-0812">Transmembrane</keyword>
<keyword id="KW-1133">Transmembrane helix</keyword>
<feature type="chain" id="PRO_0000203238" description="Uncharacterized membrane protein YML131W">
    <location>
        <begin position="1"/>
        <end position="365"/>
    </location>
</feature>
<feature type="topological domain" description="Cytoplasmic" evidence="1">
    <location>
        <begin position="1"/>
        <end position="133"/>
    </location>
</feature>
<feature type="transmembrane region" description="Helical" evidence="1">
    <location>
        <begin position="134"/>
        <end position="154"/>
    </location>
</feature>
<feature type="topological domain" description="Extracellular" evidence="1">
    <location>
        <begin position="155"/>
        <end position="169"/>
    </location>
</feature>
<feature type="transmembrane region" description="Helical" evidence="1">
    <location>
        <begin position="170"/>
        <end position="190"/>
    </location>
</feature>
<feature type="topological domain" description="Cytoplasmic" evidence="1">
    <location>
        <begin position="191"/>
        <end position="365"/>
    </location>
</feature>
<feature type="sequence conflict" description="In Ref. 3; AAS56318." evidence="2" ref="3">
    <original>V</original>
    <variation>A</variation>
    <location>
        <position position="239"/>
    </location>
</feature>
<protein>
    <recommendedName>
        <fullName>Uncharacterized membrane protein YML131W</fullName>
    </recommendedName>
</protein>
<sequence>MVLAKQWVLKNLPTPGEPFNFHFHDPACTFELIEKELSSEQLKDGELLLETTYLSNDPAQKFWISSMDKNYAKGVQPGEIIPARGIGKVLASRNKAFSPGDYVSAVTGWTTHAIISQENVQGLRKLDKNKVGKLWWYLSVLGGTSLTAYFIFFTYAQLQEREEDYGKVYLISGAAGAVGTVCIQLALNVFKASKVIAIAGGPEKVAFVESFGDNVVGVDYKDPSFKQKLIEAAGGENTVDYFIDNVGSNVLEAGVLLLKQRAMLIACGAISAYNDPSKFVFKGYSFILTKRLVVKGVLVTDNIDDFPKALDKLGSLVKHGKIDLLKSATLEDGTGDKFKNVPLIWKGLFSGVNKGKLITKVNNEE</sequence>
<gene>
    <name type="ordered locus">YML131W</name>
    <name type="ORF">YM4987.04</name>
</gene>
<evidence type="ECO:0000255" key="1"/>
<evidence type="ECO:0000305" key="2"/>
<dbReference type="EMBL" id="Z50178">
    <property type="protein sequence ID" value="CAA90552.1"/>
    <property type="molecule type" value="Genomic_DNA"/>
</dbReference>
<dbReference type="EMBL" id="AY557992">
    <property type="protein sequence ID" value="AAS56318.1"/>
    <property type="molecule type" value="Genomic_DNA"/>
</dbReference>
<dbReference type="EMBL" id="BK006946">
    <property type="protein sequence ID" value="DAA09768.1"/>
    <property type="molecule type" value="Genomic_DNA"/>
</dbReference>
<dbReference type="PIR" id="S58197">
    <property type="entry name" value="S58197"/>
</dbReference>
<dbReference type="RefSeq" id="NP_013575.1">
    <property type="nucleotide sequence ID" value="NM_001182494.1"/>
</dbReference>
<dbReference type="SMR" id="Q03102"/>
<dbReference type="BioGRID" id="35074">
    <property type="interactions" value="44"/>
</dbReference>
<dbReference type="DIP" id="DIP-5615N"/>
<dbReference type="FunCoup" id="Q03102">
    <property type="interactions" value="506"/>
</dbReference>
<dbReference type="IntAct" id="Q03102">
    <property type="interactions" value="2"/>
</dbReference>
<dbReference type="MINT" id="Q03102"/>
<dbReference type="STRING" id="4932.YML131W"/>
<dbReference type="GlyGen" id="Q03102">
    <property type="glycosylation" value="1 site"/>
</dbReference>
<dbReference type="iPTMnet" id="Q03102"/>
<dbReference type="PaxDb" id="4932-YML131W"/>
<dbReference type="PeptideAtlas" id="Q03102"/>
<dbReference type="TopDownProteomics" id="Q03102"/>
<dbReference type="EnsemblFungi" id="YML131W_mRNA">
    <property type="protein sequence ID" value="YML131W"/>
    <property type="gene ID" value="YML131W"/>
</dbReference>
<dbReference type="GeneID" id="854908"/>
<dbReference type="KEGG" id="sce:YML131W"/>
<dbReference type="AGR" id="SGD:S000004600"/>
<dbReference type="SGD" id="S000004600">
    <property type="gene designation" value="YML131W"/>
</dbReference>
<dbReference type="VEuPathDB" id="FungiDB:YML131W"/>
<dbReference type="eggNOG" id="KOG1196">
    <property type="taxonomic scope" value="Eukaryota"/>
</dbReference>
<dbReference type="HOGENOM" id="CLU_026673_29_1_1"/>
<dbReference type="InParanoid" id="Q03102"/>
<dbReference type="OMA" id="DKVMGMT"/>
<dbReference type="OrthoDB" id="809632at2759"/>
<dbReference type="BioCyc" id="YEAST:G3O-32709-MONOMER"/>
<dbReference type="BioGRID-ORCS" id="854908">
    <property type="hits" value="2 hits in 10 CRISPR screens"/>
</dbReference>
<dbReference type="PRO" id="PR:Q03102"/>
<dbReference type="Proteomes" id="UP000002311">
    <property type="component" value="Chromosome XIII"/>
</dbReference>
<dbReference type="RNAct" id="Q03102">
    <property type="molecule type" value="protein"/>
</dbReference>
<dbReference type="GO" id="GO:0005737">
    <property type="term" value="C:cytoplasm"/>
    <property type="evidence" value="ECO:0007005"/>
    <property type="project" value="SGD"/>
</dbReference>
<dbReference type="GO" id="GO:0005829">
    <property type="term" value="C:cytosol"/>
    <property type="evidence" value="ECO:0007005"/>
    <property type="project" value="SGD"/>
</dbReference>
<dbReference type="GO" id="GO:0016020">
    <property type="term" value="C:membrane"/>
    <property type="evidence" value="ECO:0007669"/>
    <property type="project" value="UniProtKB-SubCell"/>
</dbReference>
<dbReference type="GO" id="GO:0016628">
    <property type="term" value="F:oxidoreductase activity, acting on the CH-CH group of donors, NAD or NADP as acceptor"/>
    <property type="evidence" value="ECO:0007669"/>
    <property type="project" value="InterPro"/>
</dbReference>
<dbReference type="CDD" id="cd05288">
    <property type="entry name" value="PGDH"/>
    <property type="match status" value="1"/>
</dbReference>
<dbReference type="FunFam" id="3.40.50.720:FF:000781">
    <property type="entry name" value="YML131W-like protein"/>
    <property type="match status" value="1"/>
</dbReference>
<dbReference type="Gene3D" id="3.90.180.10">
    <property type="entry name" value="Medium-chain alcohol dehydrogenases, catalytic domain"/>
    <property type="match status" value="1"/>
</dbReference>
<dbReference type="Gene3D" id="3.40.50.720">
    <property type="entry name" value="NAD(P)-binding Rossmann-like Domain"/>
    <property type="match status" value="1"/>
</dbReference>
<dbReference type="InterPro" id="IPR013149">
    <property type="entry name" value="ADH-like_C"/>
</dbReference>
<dbReference type="InterPro" id="IPR041694">
    <property type="entry name" value="ADH_N_2"/>
</dbReference>
<dbReference type="InterPro" id="IPR011032">
    <property type="entry name" value="GroES-like_sf"/>
</dbReference>
<dbReference type="InterPro" id="IPR045010">
    <property type="entry name" value="MDR_fam"/>
</dbReference>
<dbReference type="InterPro" id="IPR036291">
    <property type="entry name" value="NAD(P)-bd_dom_sf"/>
</dbReference>
<dbReference type="PANTHER" id="PTHR43205:SF19">
    <property type="entry name" value="ENOYL REDUCTASE (ER) DOMAIN-CONTAINING PROTEIN"/>
    <property type="match status" value="1"/>
</dbReference>
<dbReference type="PANTHER" id="PTHR43205">
    <property type="entry name" value="PROSTAGLANDIN REDUCTASE"/>
    <property type="match status" value="1"/>
</dbReference>
<dbReference type="Pfam" id="PF16884">
    <property type="entry name" value="ADH_N_2"/>
    <property type="match status" value="1"/>
</dbReference>
<dbReference type="Pfam" id="PF00107">
    <property type="entry name" value="ADH_zinc_N"/>
    <property type="match status" value="1"/>
</dbReference>
<dbReference type="SUPFAM" id="SSF50129">
    <property type="entry name" value="GroES-like"/>
    <property type="match status" value="1"/>
</dbReference>
<dbReference type="SUPFAM" id="SSF51735">
    <property type="entry name" value="NAD(P)-binding Rossmann-fold domains"/>
    <property type="match status" value="1"/>
</dbReference>
<accession>Q03102</accession>
<accession>D6W0F4</accession>
<accession>Q6Q5K5</accession>
<reference key="1">
    <citation type="journal article" date="1997" name="Nature">
        <title>The nucleotide sequence of Saccharomyces cerevisiae chromosome XIII.</title>
        <authorList>
            <person name="Bowman S."/>
            <person name="Churcher C.M."/>
            <person name="Badcock K."/>
            <person name="Brown D."/>
            <person name="Chillingworth T."/>
            <person name="Connor R."/>
            <person name="Dedman K."/>
            <person name="Devlin K."/>
            <person name="Gentles S."/>
            <person name="Hamlin N."/>
            <person name="Hunt S."/>
            <person name="Jagels K."/>
            <person name="Lye G."/>
            <person name="Moule S."/>
            <person name="Odell C."/>
            <person name="Pearson D."/>
            <person name="Rajandream M.A."/>
            <person name="Rice P."/>
            <person name="Skelton J."/>
            <person name="Walsh S.V."/>
            <person name="Whitehead S."/>
            <person name="Barrell B.G."/>
        </authorList>
    </citation>
    <scope>NUCLEOTIDE SEQUENCE [LARGE SCALE GENOMIC DNA]</scope>
    <source>
        <strain>ATCC 204508 / S288c</strain>
    </source>
</reference>
<reference key="2">
    <citation type="journal article" date="2014" name="G3 (Bethesda)">
        <title>The reference genome sequence of Saccharomyces cerevisiae: Then and now.</title>
        <authorList>
            <person name="Engel S.R."/>
            <person name="Dietrich F.S."/>
            <person name="Fisk D.G."/>
            <person name="Binkley G."/>
            <person name="Balakrishnan R."/>
            <person name="Costanzo M.C."/>
            <person name="Dwight S.S."/>
            <person name="Hitz B.C."/>
            <person name="Karra K."/>
            <person name="Nash R.S."/>
            <person name="Weng S."/>
            <person name="Wong E.D."/>
            <person name="Lloyd P."/>
            <person name="Skrzypek M.S."/>
            <person name="Miyasato S.R."/>
            <person name="Simison M."/>
            <person name="Cherry J.M."/>
        </authorList>
    </citation>
    <scope>GENOME REANNOTATION</scope>
    <source>
        <strain>ATCC 204508 / S288c</strain>
    </source>
</reference>
<reference key="3">
    <citation type="journal article" date="2007" name="Genome Res.">
        <title>Approaching a complete repository of sequence-verified protein-encoding clones for Saccharomyces cerevisiae.</title>
        <authorList>
            <person name="Hu Y."/>
            <person name="Rolfs A."/>
            <person name="Bhullar B."/>
            <person name="Murthy T.V.S."/>
            <person name="Zhu C."/>
            <person name="Berger M.F."/>
            <person name="Camargo A.A."/>
            <person name="Kelley F."/>
            <person name="McCarron S."/>
            <person name="Jepson D."/>
            <person name="Richardson A."/>
            <person name="Raphael J."/>
            <person name="Moreira D."/>
            <person name="Taycher E."/>
            <person name="Zuo D."/>
            <person name="Mohr S."/>
            <person name="Kane M.F."/>
            <person name="Williamson J."/>
            <person name="Simpson A.J.G."/>
            <person name="Bulyk M.L."/>
            <person name="Harlow E."/>
            <person name="Marsischky G."/>
            <person name="Kolodner R.D."/>
            <person name="LaBaer J."/>
        </authorList>
    </citation>
    <scope>NUCLEOTIDE SEQUENCE [GENOMIC DNA]</scope>
    <source>
        <strain>ATCC 204508 / S288c</strain>
    </source>
</reference>
<reference key="4">
    <citation type="journal article" date="2006" name="Proc. Natl. Acad. Sci. U.S.A.">
        <title>A global topology map of the Saccharomyces cerevisiae membrane proteome.</title>
        <authorList>
            <person name="Kim H."/>
            <person name="Melen K."/>
            <person name="Oesterberg M."/>
            <person name="von Heijne G."/>
        </authorList>
    </citation>
    <scope>TOPOLOGY [LARGE SCALE ANALYSIS]</scope>
    <source>
        <strain>ATCC 208353 / W303-1A</strain>
    </source>
</reference>
<proteinExistence type="evidence at protein level"/>
<comment type="subcellular location">
    <subcellularLocation>
        <location>Membrane</location>
        <topology>Multi-pass membrane protein</topology>
    </subcellularLocation>
</comment>